<accession>C1ASU1</accession>
<evidence type="ECO:0000255" key="1">
    <source>
        <dbReference type="HAMAP-Rule" id="MF_00225"/>
    </source>
</evidence>
<organism>
    <name type="scientific">Rhodococcus opacus (strain B4)</name>
    <dbReference type="NCBI Taxonomy" id="632772"/>
    <lineage>
        <taxon>Bacteria</taxon>
        <taxon>Bacillati</taxon>
        <taxon>Actinomycetota</taxon>
        <taxon>Actinomycetes</taxon>
        <taxon>Mycobacteriales</taxon>
        <taxon>Nocardiaceae</taxon>
        <taxon>Rhodococcus</taxon>
    </lineage>
</organism>
<sequence length="356" mass="37728">MYHLLLRVMFRLPPERIHHLAFAAMRLVTRFSPLRQLVGRVLVVDDPVLRNTVFGLDFPAPLGLAAGFDKDATGVDAWGPLGFGFAEVGTVTAQAQPGNPAPRLFRLPADRALINRMGFNNHGAGNAANHLRQRRAGVPIGANIGKTKIVDAADAPADYTASAHLLGPLADFMVVNVSSPNTPGLRDLQAVESLRPLLRAVLDSVTVPVLVKIAPDLSDDDVDAVADLALELGLAGIVATNTTIRRDGLNTPDDEVTAIGAGGLSGPPVAERSLEVLRRLHARVGDRLVLISVGGIETVDQAWERILAGASLVQGYTGFIYGGPFWARRIHKGLARKVREAGYSSVADAVGAGAVR</sequence>
<comment type="function">
    <text evidence="1">Catalyzes the conversion of dihydroorotate to orotate with quinone as electron acceptor.</text>
</comment>
<comment type="catalytic activity">
    <reaction evidence="1">
        <text>(S)-dihydroorotate + a quinone = orotate + a quinol</text>
        <dbReference type="Rhea" id="RHEA:30187"/>
        <dbReference type="ChEBI" id="CHEBI:24646"/>
        <dbReference type="ChEBI" id="CHEBI:30839"/>
        <dbReference type="ChEBI" id="CHEBI:30864"/>
        <dbReference type="ChEBI" id="CHEBI:132124"/>
        <dbReference type="EC" id="1.3.5.2"/>
    </reaction>
</comment>
<comment type="cofactor">
    <cofactor evidence="1">
        <name>FMN</name>
        <dbReference type="ChEBI" id="CHEBI:58210"/>
    </cofactor>
    <text evidence="1">Binds 1 FMN per subunit.</text>
</comment>
<comment type="pathway">
    <text evidence="1">Pyrimidine metabolism; UMP biosynthesis via de novo pathway; orotate from (S)-dihydroorotate (quinone route): step 1/1.</text>
</comment>
<comment type="subunit">
    <text evidence="1">Monomer.</text>
</comment>
<comment type="subcellular location">
    <subcellularLocation>
        <location evidence="1">Cell membrane</location>
        <topology evidence="1">Peripheral membrane protein</topology>
    </subcellularLocation>
</comment>
<comment type="similarity">
    <text evidence="1">Belongs to the dihydroorotate dehydrogenase family. Type 2 subfamily.</text>
</comment>
<dbReference type="EC" id="1.3.5.2" evidence="1"/>
<dbReference type="EMBL" id="AP011115">
    <property type="protein sequence ID" value="BAH48873.1"/>
    <property type="molecule type" value="Genomic_DNA"/>
</dbReference>
<dbReference type="RefSeq" id="WP_012687878.1">
    <property type="nucleotide sequence ID" value="NC_012522.1"/>
</dbReference>
<dbReference type="SMR" id="C1ASU1"/>
<dbReference type="STRING" id="632772.ROP_06260"/>
<dbReference type="KEGG" id="rop:ROP_06260"/>
<dbReference type="PATRIC" id="fig|632772.20.peg.686"/>
<dbReference type="HOGENOM" id="CLU_013640_2_0_11"/>
<dbReference type="OrthoDB" id="9802377at2"/>
<dbReference type="UniPathway" id="UPA00070">
    <property type="reaction ID" value="UER00946"/>
</dbReference>
<dbReference type="Proteomes" id="UP000002212">
    <property type="component" value="Chromosome"/>
</dbReference>
<dbReference type="GO" id="GO:0005737">
    <property type="term" value="C:cytoplasm"/>
    <property type="evidence" value="ECO:0007669"/>
    <property type="project" value="InterPro"/>
</dbReference>
<dbReference type="GO" id="GO:0005886">
    <property type="term" value="C:plasma membrane"/>
    <property type="evidence" value="ECO:0007669"/>
    <property type="project" value="UniProtKB-SubCell"/>
</dbReference>
<dbReference type="GO" id="GO:0106430">
    <property type="term" value="F:dihydroorotate dehydrogenase (quinone) activity"/>
    <property type="evidence" value="ECO:0007669"/>
    <property type="project" value="UniProtKB-EC"/>
</dbReference>
<dbReference type="GO" id="GO:0006207">
    <property type="term" value="P:'de novo' pyrimidine nucleobase biosynthetic process"/>
    <property type="evidence" value="ECO:0007669"/>
    <property type="project" value="InterPro"/>
</dbReference>
<dbReference type="GO" id="GO:0044205">
    <property type="term" value="P:'de novo' UMP biosynthetic process"/>
    <property type="evidence" value="ECO:0007669"/>
    <property type="project" value="UniProtKB-UniRule"/>
</dbReference>
<dbReference type="CDD" id="cd04738">
    <property type="entry name" value="DHOD_2_like"/>
    <property type="match status" value="1"/>
</dbReference>
<dbReference type="FunFam" id="3.20.20.70:FF:000123">
    <property type="entry name" value="Dihydroorotate dehydrogenase (quinone)"/>
    <property type="match status" value="1"/>
</dbReference>
<dbReference type="Gene3D" id="3.20.20.70">
    <property type="entry name" value="Aldolase class I"/>
    <property type="match status" value="1"/>
</dbReference>
<dbReference type="HAMAP" id="MF_00225">
    <property type="entry name" value="DHO_dh_type2"/>
    <property type="match status" value="1"/>
</dbReference>
<dbReference type="InterPro" id="IPR013785">
    <property type="entry name" value="Aldolase_TIM"/>
</dbReference>
<dbReference type="InterPro" id="IPR050074">
    <property type="entry name" value="DHO_dehydrogenase"/>
</dbReference>
<dbReference type="InterPro" id="IPR005719">
    <property type="entry name" value="Dihydroorotate_DH_2"/>
</dbReference>
<dbReference type="InterPro" id="IPR005720">
    <property type="entry name" value="Dihydroorotate_DH_cat"/>
</dbReference>
<dbReference type="InterPro" id="IPR001295">
    <property type="entry name" value="Dihydroorotate_DH_CS"/>
</dbReference>
<dbReference type="NCBIfam" id="NF003645">
    <property type="entry name" value="PRK05286.1-2"/>
    <property type="match status" value="1"/>
</dbReference>
<dbReference type="NCBIfam" id="NF003648">
    <property type="entry name" value="PRK05286.2-1"/>
    <property type="match status" value="1"/>
</dbReference>
<dbReference type="NCBIfam" id="NF003652">
    <property type="entry name" value="PRK05286.2-5"/>
    <property type="match status" value="1"/>
</dbReference>
<dbReference type="NCBIfam" id="TIGR01036">
    <property type="entry name" value="pyrD_sub2"/>
    <property type="match status" value="1"/>
</dbReference>
<dbReference type="PANTHER" id="PTHR48109:SF4">
    <property type="entry name" value="DIHYDROOROTATE DEHYDROGENASE (QUINONE), MITOCHONDRIAL"/>
    <property type="match status" value="1"/>
</dbReference>
<dbReference type="PANTHER" id="PTHR48109">
    <property type="entry name" value="DIHYDROOROTATE DEHYDROGENASE (QUINONE), MITOCHONDRIAL-RELATED"/>
    <property type="match status" value="1"/>
</dbReference>
<dbReference type="Pfam" id="PF01180">
    <property type="entry name" value="DHO_dh"/>
    <property type="match status" value="1"/>
</dbReference>
<dbReference type="SUPFAM" id="SSF51395">
    <property type="entry name" value="FMN-linked oxidoreductases"/>
    <property type="match status" value="1"/>
</dbReference>
<dbReference type="PROSITE" id="PS00911">
    <property type="entry name" value="DHODEHASE_1"/>
    <property type="match status" value="1"/>
</dbReference>
<dbReference type="PROSITE" id="PS00912">
    <property type="entry name" value="DHODEHASE_2"/>
    <property type="match status" value="1"/>
</dbReference>
<name>PYRD_RHOOB</name>
<reference key="1">
    <citation type="submission" date="2009-03" db="EMBL/GenBank/DDBJ databases">
        <title>Comparison of the complete genome sequences of Rhodococcus erythropolis PR4 and Rhodococcus opacus B4.</title>
        <authorList>
            <person name="Takarada H."/>
            <person name="Sekine M."/>
            <person name="Hosoyama A."/>
            <person name="Yamada R."/>
            <person name="Fujisawa T."/>
            <person name="Omata S."/>
            <person name="Shimizu A."/>
            <person name="Tsukatani N."/>
            <person name="Tanikawa S."/>
            <person name="Fujita N."/>
            <person name="Harayama S."/>
        </authorList>
    </citation>
    <scope>NUCLEOTIDE SEQUENCE [LARGE SCALE GENOMIC DNA]</scope>
    <source>
        <strain>B4</strain>
    </source>
</reference>
<proteinExistence type="inferred from homology"/>
<feature type="chain" id="PRO_1000195088" description="Dihydroorotate dehydrogenase (quinone)">
    <location>
        <begin position="1"/>
        <end position="356"/>
    </location>
</feature>
<feature type="active site" description="Nucleophile" evidence="1">
    <location>
        <position position="179"/>
    </location>
</feature>
<feature type="binding site" evidence="1">
    <location>
        <begin position="66"/>
        <end position="70"/>
    </location>
    <ligand>
        <name>FMN</name>
        <dbReference type="ChEBI" id="CHEBI:58210"/>
    </ligand>
</feature>
<feature type="binding site" evidence="1">
    <location>
        <position position="70"/>
    </location>
    <ligand>
        <name>substrate</name>
    </ligand>
</feature>
<feature type="binding site" evidence="1">
    <location>
        <position position="90"/>
    </location>
    <ligand>
        <name>FMN</name>
        <dbReference type="ChEBI" id="CHEBI:58210"/>
    </ligand>
</feature>
<feature type="binding site" evidence="1">
    <location>
        <begin position="115"/>
        <end position="119"/>
    </location>
    <ligand>
        <name>substrate</name>
    </ligand>
</feature>
<feature type="binding site" evidence="1">
    <location>
        <position position="143"/>
    </location>
    <ligand>
        <name>FMN</name>
        <dbReference type="ChEBI" id="CHEBI:58210"/>
    </ligand>
</feature>
<feature type="binding site" evidence="1">
    <location>
        <position position="176"/>
    </location>
    <ligand>
        <name>FMN</name>
        <dbReference type="ChEBI" id="CHEBI:58210"/>
    </ligand>
</feature>
<feature type="binding site" evidence="1">
    <location>
        <position position="176"/>
    </location>
    <ligand>
        <name>substrate</name>
    </ligand>
</feature>
<feature type="binding site" evidence="1">
    <location>
        <position position="181"/>
    </location>
    <ligand>
        <name>substrate</name>
    </ligand>
</feature>
<feature type="binding site" evidence="1">
    <location>
        <position position="212"/>
    </location>
    <ligand>
        <name>FMN</name>
        <dbReference type="ChEBI" id="CHEBI:58210"/>
    </ligand>
</feature>
<feature type="binding site" evidence="1">
    <location>
        <position position="240"/>
    </location>
    <ligand>
        <name>FMN</name>
        <dbReference type="ChEBI" id="CHEBI:58210"/>
    </ligand>
</feature>
<feature type="binding site" evidence="1">
    <location>
        <begin position="241"/>
        <end position="242"/>
    </location>
    <ligand>
        <name>substrate</name>
    </ligand>
</feature>
<feature type="binding site" evidence="1">
    <location>
        <position position="266"/>
    </location>
    <ligand>
        <name>FMN</name>
        <dbReference type="ChEBI" id="CHEBI:58210"/>
    </ligand>
</feature>
<feature type="binding site" evidence="1">
    <location>
        <position position="295"/>
    </location>
    <ligand>
        <name>FMN</name>
        <dbReference type="ChEBI" id="CHEBI:58210"/>
    </ligand>
</feature>
<feature type="binding site" evidence="1">
    <location>
        <begin position="316"/>
        <end position="317"/>
    </location>
    <ligand>
        <name>FMN</name>
        <dbReference type="ChEBI" id="CHEBI:58210"/>
    </ligand>
</feature>
<protein>
    <recommendedName>
        <fullName evidence="1">Dihydroorotate dehydrogenase (quinone)</fullName>
        <ecNumber evidence="1">1.3.5.2</ecNumber>
    </recommendedName>
    <alternativeName>
        <fullName evidence="1">DHOdehase</fullName>
        <shortName evidence="1">DHOD</shortName>
        <shortName evidence="1">DHODase</shortName>
    </alternativeName>
    <alternativeName>
        <fullName evidence="1">Dihydroorotate oxidase</fullName>
    </alternativeName>
</protein>
<gene>
    <name evidence="1" type="primary">pyrD</name>
    <name type="ordered locus">ROP_06260</name>
</gene>
<keyword id="KW-1003">Cell membrane</keyword>
<keyword id="KW-0285">Flavoprotein</keyword>
<keyword id="KW-0288">FMN</keyword>
<keyword id="KW-0472">Membrane</keyword>
<keyword id="KW-0560">Oxidoreductase</keyword>
<keyword id="KW-0665">Pyrimidine biosynthesis</keyword>